<evidence type="ECO:0000250" key="1"/>
<evidence type="ECO:0000269" key="2">
    <source>
    </source>
</evidence>
<evidence type="ECO:0000303" key="3">
    <source>
    </source>
</evidence>
<evidence type="ECO:0000303" key="4">
    <source>
    </source>
</evidence>
<evidence type="ECO:0000305" key="5"/>
<evidence type="ECO:0007744" key="6">
    <source>
    </source>
</evidence>
<evidence type="ECO:0007829" key="7">
    <source>
        <dbReference type="PDB" id="8BFJ"/>
    </source>
</evidence>
<accession>Q9H3C7</accession>
<accession>B2RPK7</accession>
<accession>Q96T90</accession>
<accession>Q9GZR8</accession>
<accession>Q9H767</accession>
<dbReference type="EMBL" id="AF268387">
    <property type="protein sequence ID" value="AAK38614.1"/>
    <property type="molecule type" value="mRNA"/>
</dbReference>
<dbReference type="EMBL" id="AF126964">
    <property type="protein sequence ID" value="AAG43247.1"/>
    <property type="molecule type" value="mRNA"/>
</dbReference>
<dbReference type="EMBL" id="AK024883">
    <property type="protein sequence ID" value="BAB15031.1"/>
    <property type="status" value="ALT_FRAME"/>
    <property type="molecule type" value="mRNA"/>
</dbReference>
<dbReference type="EMBL" id="AK026214">
    <property type="protein sequence ID" value="BAB15397.1"/>
    <property type="status" value="ALT_INIT"/>
    <property type="molecule type" value="mRNA"/>
</dbReference>
<dbReference type="EMBL" id="CH471199">
    <property type="protein sequence ID" value="EAW57566.1"/>
    <property type="molecule type" value="Genomic_DNA"/>
</dbReference>
<dbReference type="EMBL" id="BC137491">
    <property type="protein sequence ID" value="AAI37492.1"/>
    <property type="molecule type" value="mRNA"/>
</dbReference>
<dbReference type="EMBL" id="AJ404670">
    <property type="protein sequence ID" value="CAC18878.1"/>
    <property type="status" value="ALT_FRAME"/>
    <property type="molecule type" value="mRNA"/>
</dbReference>
<dbReference type="CCDS" id="CCDS11314.1">
    <molecule id="Q9H3C7-1"/>
</dbReference>
<dbReference type="RefSeq" id="NP_079111.1">
    <molecule id="Q9H3C7-1"/>
    <property type="nucleotide sequence ID" value="NM_024835.5"/>
</dbReference>
<dbReference type="PDB" id="8BFJ">
    <property type="method" value="X-ray"/>
    <property type="resolution" value="2.23 A"/>
    <property type="chains" value="B=638-673"/>
</dbReference>
<dbReference type="PDBsum" id="8BFJ"/>
<dbReference type="SMR" id="Q9H3C7"/>
<dbReference type="BioGRID" id="122977">
    <property type="interactions" value="16"/>
</dbReference>
<dbReference type="FunCoup" id="Q9H3C7">
    <property type="interactions" value="4444"/>
</dbReference>
<dbReference type="IntAct" id="Q9H3C7">
    <property type="interactions" value="5"/>
</dbReference>
<dbReference type="STRING" id="9606.ENSP00000478220"/>
<dbReference type="iPTMnet" id="Q9H3C7"/>
<dbReference type="PhosphoSitePlus" id="Q9H3C7"/>
<dbReference type="BioMuta" id="GGNBP2"/>
<dbReference type="DMDM" id="74718217"/>
<dbReference type="jPOST" id="Q9H3C7"/>
<dbReference type="MassIVE" id="Q9H3C7"/>
<dbReference type="PaxDb" id="9606-ENSP00000478220"/>
<dbReference type="PeptideAtlas" id="Q9H3C7"/>
<dbReference type="ProteomicsDB" id="80689">
    <molecule id="Q9H3C7-1"/>
</dbReference>
<dbReference type="ProteomicsDB" id="80690">
    <molecule id="Q9H3C7-2"/>
</dbReference>
<dbReference type="ProteomicsDB" id="80691">
    <molecule id="Q9H3C7-3"/>
</dbReference>
<dbReference type="Pumba" id="Q9H3C7"/>
<dbReference type="Antibodypedia" id="73502">
    <property type="antibodies" value="90 antibodies from 17 providers"/>
</dbReference>
<dbReference type="DNASU" id="79893"/>
<dbReference type="Ensembl" id="ENST00000613102.5">
    <molecule id="Q9H3C7-1"/>
    <property type="protein sequence ID" value="ENSP00000478220.1"/>
    <property type="gene ID" value="ENSG00000278311.5"/>
</dbReference>
<dbReference type="Ensembl" id="ENST00000621686.2">
    <molecule id="Q9H3C7-1"/>
    <property type="protein sequence ID" value="ENSP00000478954.1"/>
    <property type="gene ID" value="ENSG00000275099.2"/>
</dbReference>
<dbReference type="GeneID" id="79893"/>
<dbReference type="KEGG" id="hsa:79893"/>
<dbReference type="MANE-Select" id="ENST00000613102.5">
    <property type="protein sequence ID" value="ENSP00000478220.1"/>
    <property type="RefSeq nucleotide sequence ID" value="NM_024835.5"/>
    <property type="RefSeq protein sequence ID" value="NP_079111.1"/>
</dbReference>
<dbReference type="UCSC" id="uc002hnb.4">
    <molecule id="Q9H3C7-1"/>
    <property type="organism name" value="human"/>
</dbReference>
<dbReference type="AGR" id="HGNC:19357"/>
<dbReference type="CTD" id="79893"/>
<dbReference type="DisGeNET" id="79893"/>
<dbReference type="GeneCards" id="GGNBP2"/>
<dbReference type="HGNC" id="HGNC:19357">
    <property type="gene designation" value="GGNBP2"/>
</dbReference>
<dbReference type="HPA" id="ENSG00000278311">
    <property type="expression patterns" value="Low tissue specificity"/>
</dbReference>
<dbReference type="MIM" id="612275">
    <property type="type" value="gene"/>
</dbReference>
<dbReference type="neXtProt" id="NX_Q9H3C7"/>
<dbReference type="OpenTargets" id="ENSG00000278311"/>
<dbReference type="PharmGKB" id="PA162389409"/>
<dbReference type="VEuPathDB" id="HostDB:ENSG00000278311"/>
<dbReference type="eggNOG" id="ENOG502QQ20">
    <property type="taxonomic scope" value="Eukaryota"/>
</dbReference>
<dbReference type="GeneTree" id="ENSGT00390000009552"/>
<dbReference type="HOGENOM" id="CLU_024870_0_0_1"/>
<dbReference type="InParanoid" id="Q9H3C7"/>
<dbReference type="OMA" id="MMLMDLN"/>
<dbReference type="OrthoDB" id="2422440at2759"/>
<dbReference type="PAN-GO" id="Q9H3C7">
    <property type="GO annotations" value="2 GO annotations based on evolutionary models"/>
</dbReference>
<dbReference type="PhylomeDB" id="Q9H3C7"/>
<dbReference type="TreeFam" id="TF323487"/>
<dbReference type="PathwayCommons" id="Q9H3C7"/>
<dbReference type="SignaLink" id="Q9H3C7"/>
<dbReference type="SIGNOR" id="Q9H3C7"/>
<dbReference type="BioGRID-ORCS" id="79893">
    <property type="hits" value="113 hits in 1158 CRISPR screens"/>
</dbReference>
<dbReference type="ChiTaRS" id="GGNBP2">
    <property type="organism name" value="human"/>
</dbReference>
<dbReference type="GenomeRNAi" id="79893"/>
<dbReference type="Pharos" id="Q9H3C7">
    <property type="development level" value="Tbio"/>
</dbReference>
<dbReference type="PRO" id="PR:Q9H3C7"/>
<dbReference type="Proteomes" id="UP000005640">
    <property type="component" value="Chromosome 17"/>
</dbReference>
<dbReference type="RNAct" id="Q9H3C7">
    <property type="molecule type" value="protein"/>
</dbReference>
<dbReference type="Bgee" id="ENSG00000278311">
    <property type="expression patterns" value="Expressed in left testis and 100 other cell types or tissues"/>
</dbReference>
<dbReference type="ExpressionAtlas" id="Q9H3C7">
    <property type="expression patterns" value="baseline and differential"/>
</dbReference>
<dbReference type="GO" id="GO:0005737">
    <property type="term" value="C:cytoplasm"/>
    <property type="evidence" value="ECO:0000318"/>
    <property type="project" value="GO_Central"/>
</dbReference>
<dbReference type="GO" id="GO:0031410">
    <property type="term" value="C:cytoplasmic vesicle"/>
    <property type="evidence" value="ECO:0007669"/>
    <property type="project" value="UniProtKB-KW"/>
</dbReference>
<dbReference type="GO" id="GO:0005634">
    <property type="term" value="C:nucleus"/>
    <property type="evidence" value="ECO:0000318"/>
    <property type="project" value="GO_Central"/>
</dbReference>
<dbReference type="GO" id="GO:0030154">
    <property type="term" value="P:cell differentiation"/>
    <property type="evidence" value="ECO:0007669"/>
    <property type="project" value="UniProtKB-KW"/>
</dbReference>
<dbReference type="GO" id="GO:0060716">
    <property type="term" value="P:labyrinthine layer blood vessel development"/>
    <property type="evidence" value="ECO:0007669"/>
    <property type="project" value="Ensembl"/>
</dbReference>
<dbReference type="GO" id="GO:0008285">
    <property type="term" value="P:negative regulation of cell population proliferation"/>
    <property type="evidence" value="ECO:0007669"/>
    <property type="project" value="Ensembl"/>
</dbReference>
<dbReference type="GO" id="GO:0010629">
    <property type="term" value="P:negative regulation of gene expression"/>
    <property type="evidence" value="ECO:0007669"/>
    <property type="project" value="Ensembl"/>
</dbReference>
<dbReference type="GO" id="GO:1904893">
    <property type="term" value="P:negative regulation of receptor signaling pathway via STAT"/>
    <property type="evidence" value="ECO:0007669"/>
    <property type="project" value="Ensembl"/>
</dbReference>
<dbReference type="GO" id="GO:0007283">
    <property type="term" value="P:spermatogenesis"/>
    <property type="evidence" value="ECO:0007669"/>
    <property type="project" value="UniProtKB-KW"/>
</dbReference>
<dbReference type="InterPro" id="IPR026073">
    <property type="entry name" value="GGNBP2"/>
</dbReference>
<dbReference type="PANTHER" id="PTHR13601">
    <property type="entry name" value="GAMETOGENETIN-BINDING PROTEIN 2"/>
    <property type="match status" value="1"/>
</dbReference>
<dbReference type="PANTHER" id="PTHR13601:SF2">
    <property type="entry name" value="GAMETOGENETIN-BINDING PROTEIN 2"/>
    <property type="match status" value="1"/>
</dbReference>
<protein>
    <recommendedName>
        <fullName>Gametogenetin-binding protein 2</fullName>
    </recommendedName>
    <alternativeName>
        <fullName>Laryngeal carcinoma-related protein 1</fullName>
    </alternativeName>
    <alternativeName>
        <fullName>Protein ZNF403</fullName>
    </alternativeName>
</protein>
<name>GGNB2_HUMAN</name>
<proteinExistence type="evidence at protein level"/>
<organism>
    <name type="scientific">Homo sapiens</name>
    <name type="common">Human</name>
    <dbReference type="NCBI Taxonomy" id="9606"/>
    <lineage>
        <taxon>Eukaryota</taxon>
        <taxon>Metazoa</taxon>
        <taxon>Chordata</taxon>
        <taxon>Craniata</taxon>
        <taxon>Vertebrata</taxon>
        <taxon>Euteleostomi</taxon>
        <taxon>Mammalia</taxon>
        <taxon>Eutheria</taxon>
        <taxon>Euarchontoglires</taxon>
        <taxon>Primates</taxon>
        <taxon>Haplorrhini</taxon>
        <taxon>Catarrhini</taxon>
        <taxon>Hominidae</taxon>
        <taxon>Homo</taxon>
    </lineage>
</organism>
<gene>
    <name type="primary">GGNBP2</name>
    <name type="synonym">LCRG1</name>
    <name type="synonym">LZK1</name>
    <name type="synonym">ZNF403</name>
</gene>
<feature type="chain" id="PRO_0000239348" description="Gametogenetin-binding protein 2">
    <location>
        <begin position="1"/>
        <end position="697"/>
    </location>
</feature>
<feature type="modified residue" description="Phosphoserine" evidence="6">
    <location>
        <position position="360"/>
    </location>
</feature>
<feature type="splice variant" id="VSP_019175" description="In isoform 2." evidence="4">
    <original>RRERHA</original>
    <variation>YEYVIC</variation>
    <location>
        <begin position="283"/>
        <end position="288"/>
    </location>
</feature>
<feature type="splice variant" id="VSP_019176" description="In isoform 2." evidence="4">
    <location>
        <begin position="289"/>
        <end position="697"/>
    </location>
</feature>
<feature type="splice variant" id="VSP_019177" description="In isoform 3." evidence="3">
    <original>L</original>
    <variation>K</variation>
    <location>
        <position position="457"/>
    </location>
</feature>
<feature type="splice variant" id="VSP_019178" description="In isoform 3." evidence="3">
    <location>
        <begin position="458"/>
        <end position="697"/>
    </location>
</feature>
<feature type="sequence conflict" description="In Ref. 3; BAB15031." evidence="5" ref="3">
    <original>C</original>
    <variation>Y</variation>
    <location>
        <position position="415"/>
    </location>
</feature>
<feature type="helix" evidence="7">
    <location>
        <begin position="645"/>
        <end position="653"/>
    </location>
</feature>
<feature type="helix" evidence="7">
    <location>
        <begin position="656"/>
        <end position="670"/>
    </location>
</feature>
<comment type="function">
    <text>May be involved in spermatogenesis.</text>
</comment>
<comment type="subunit">
    <text evidence="1">Interacts with GGN.</text>
</comment>
<comment type="subcellular location">
    <subcellularLocation>
        <location evidence="1">Cytoplasmic vesicle</location>
    </subcellularLocation>
    <text evidence="1">Associated with vesicular structures.</text>
</comment>
<comment type="alternative products">
    <event type="alternative splicing"/>
    <isoform>
        <id>Q9H3C7-1</id>
        <name>1</name>
        <sequence type="displayed"/>
    </isoform>
    <isoform>
        <id>Q9H3C7-2</id>
        <name>2</name>
        <sequence type="described" ref="VSP_019175 VSP_019176"/>
    </isoform>
    <isoform>
        <id>Q9H3C7-3</id>
        <name>3</name>
        <sequence type="described" ref="VSP_019177 VSP_019178"/>
    </isoform>
</comment>
<comment type="tissue specificity">
    <text evidence="2">Expressed in heart, brain, placenta, lung, liver, skeletal muscle, kidney and pancreas. Expressed more abundantly in heart, pancreas and skeletal muscle.</text>
</comment>
<comment type="miscellaneous">
    <text>Strongly down-regulated in 40% of primary laryngeal carcinoma and in 6 of 10 various cancer cell lines.</text>
</comment>
<comment type="sequence caution" evidence="5">
    <conflict type="frameshift">
        <sequence resource="EMBL-CDS" id="BAB15031"/>
    </conflict>
</comment>
<comment type="sequence caution" evidence="5">
    <conflict type="erroneous initiation">
        <sequence resource="EMBL-CDS" id="BAB15397"/>
    </conflict>
</comment>
<comment type="sequence caution" evidence="5">
    <conflict type="frameshift">
        <sequence resource="EMBL-CDS" id="CAC18878"/>
    </conflict>
</comment>
<reference key="1">
    <citation type="journal article" date="2004" name="Cancer Lett.">
        <title>Molecular cloning and characterization of LCRG1 a novel gene localized to the tumor suppressor locus D17S800-D17S930.</title>
        <authorList>
            <person name="Li Y."/>
            <person name="Chen Z."/>
        </authorList>
    </citation>
    <scope>NUCLEOTIDE SEQUENCE [MRNA] (ISOFORM 2)</scope>
    <scope>TISSUE SPECIFICITY</scope>
</reference>
<reference key="2">
    <citation type="submission" date="1999-02" db="EMBL/GenBank/DDBJ databases">
        <title>Cloning of a novel gene of a zinc finger protein.</title>
        <authorList>
            <person name="Li Z.K."/>
            <person name="Ling Z."/>
        </authorList>
    </citation>
    <scope>NUCLEOTIDE SEQUENCE [MRNA] (ISOFORM 1)</scope>
</reference>
<reference key="3">
    <citation type="journal article" date="2004" name="Nat. Genet.">
        <title>Complete sequencing and characterization of 21,243 full-length human cDNAs.</title>
        <authorList>
            <person name="Ota T."/>
            <person name="Suzuki Y."/>
            <person name="Nishikawa T."/>
            <person name="Otsuki T."/>
            <person name="Sugiyama T."/>
            <person name="Irie R."/>
            <person name="Wakamatsu A."/>
            <person name="Hayashi K."/>
            <person name="Sato H."/>
            <person name="Nagai K."/>
            <person name="Kimura K."/>
            <person name="Makita H."/>
            <person name="Sekine M."/>
            <person name="Obayashi M."/>
            <person name="Nishi T."/>
            <person name="Shibahara T."/>
            <person name="Tanaka T."/>
            <person name="Ishii S."/>
            <person name="Yamamoto J."/>
            <person name="Saito K."/>
            <person name="Kawai Y."/>
            <person name="Isono Y."/>
            <person name="Nakamura Y."/>
            <person name="Nagahari K."/>
            <person name="Murakami K."/>
            <person name="Yasuda T."/>
            <person name="Iwayanagi T."/>
            <person name="Wagatsuma M."/>
            <person name="Shiratori A."/>
            <person name="Sudo H."/>
            <person name="Hosoiri T."/>
            <person name="Kaku Y."/>
            <person name="Kodaira H."/>
            <person name="Kondo H."/>
            <person name="Sugawara M."/>
            <person name="Takahashi M."/>
            <person name="Kanda K."/>
            <person name="Yokoi T."/>
            <person name="Furuya T."/>
            <person name="Kikkawa E."/>
            <person name="Omura Y."/>
            <person name="Abe K."/>
            <person name="Kamihara K."/>
            <person name="Katsuta N."/>
            <person name="Sato K."/>
            <person name="Tanikawa M."/>
            <person name="Yamazaki M."/>
            <person name="Ninomiya K."/>
            <person name="Ishibashi T."/>
            <person name="Yamashita H."/>
            <person name="Murakawa K."/>
            <person name="Fujimori K."/>
            <person name="Tanai H."/>
            <person name="Kimata M."/>
            <person name="Watanabe M."/>
            <person name="Hiraoka S."/>
            <person name="Chiba Y."/>
            <person name="Ishida S."/>
            <person name="Ono Y."/>
            <person name="Takiguchi S."/>
            <person name="Watanabe S."/>
            <person name="Yosida M."/>
            <person name="Hotuta T."/>
            <person name="Kusano J."/>
            <person name="Kanehori K."/>
            <person name="Takahashi-Fujii A."/>
            <person name="Hara H."/>
            <person name="Tanase T.-O."/>
            <person name="Nomura Y."/>
            <person name="Togiya S."/>
            <person name="Komai F."/>
            <person name="Hara R."/>
            <person name="Takeuchi K."/>
            <person name="Arita M."/>
            <person name="Imose N."/>
            <person name="Musashino K."/>
            <person name="Yuuki H."/>
            <person name="Oshima A."/>
            <person name="Sasaki N."/>
            <person name="Aotsuka S."/>
            <person name="Yoshikawa Y."/>
            <person name="Matsunawa H."/>
            <person name="Ichihara T."/>
            <person name="Shiohata N."/>
            <person name="Sano S."/>
            <person name="Moriya S."/>
            <person name="Momiyama H."/>
            <person name="Satoh N."/>
            <person name="Takami S."/>
            <person name="Terashima Y."/>
            <person name="Suzuki O."/>
            <person name="Nakagawa S."/>
            <person name="Senoh A."/>
            <person name="Mizoguchi H."/>
            <person name="Goto Y."/>
            <person name="Shimizu F."/>
            <person name="Wakebe H."/>
            <person name="Hishigaki H."/>
            <person name="Watanabe T."/>
            <person name="Sugiyama A."/>
            <person name="Takemoto M."/>
            <person name="Kawakami B."/>
            <person name="Yamazaki M."/>
            <person name="Watanabe K."/>
            <person name="Kumagai A."/>
            <person name="Itakura S."/>
            <person name="Fukuzumi Y."/>
            <person name="Fujimori Y."/>
            <person name="Komiyama M."/>
            <person name="Tashiro H."/>
            <person name="Tanigami A."/>
            <person name="Fujiwara T."/>
            <person name="Ono T."/>
            <person name="Yamada K."/>
            <person name="Fujii Y."/>
            <person name="Ozaki K."/>
            <person name="Hirao M."/>
            <person name="Ohmori Y."/>
            <person name="Kawabata A."/>
            <person name="Hikiji T."/>
            <person name="Kobatake N."/>
            <person name="Inagaki H."/>
            <person name="Ikema Y."/>
            <person name="Okamoto S."/>
            <person name="Okitani R."/>
            <person name="Kawakami T."/>
            <person name="Noguchi S."/>
            <person name="Itoh T."/>
            <person name="Shigeta K."/>
            <person name="Senba T."/>
            <person name="Matsumura K."/>
            <person name="Nakajima Y."/>
            <person name="Mizuno T."/>
            <person name="Morinaga M."/>
            <person name="Sasaki M."/>
            <person name="Togashi T."/>
            <person name="Oyama M."/>
            <person name="Hata H."/>
            <person name="Watanabe M."/>
            <person name="Komatsu T."/>
            <person name="Mizushima-Sugano J."/>
            <person name="Satoh T."/>
            <person name="Shirai Y."/>
            <person name="Takahashi Y."/>
            <person name="Nakagawa K."/>
            <person name="Okumura K."/>
            <person name="Nagase T."/>
            <person name="Nomura N."/>
            <person name="Kikuchi H."/>
            <person name="Masuho Y."/>
            <person name="Yamashita R."/>
            <person name="Nakai K."/>
            <person name="Yada T."/>
            <person name="Nakamura Y."/>
            <person name="Ohara O."/>
            <person name="Isogai T."/>
            <person name="Sugano S."/>
        </authorList>
    </citation>
    <scope>NUCLEOTIDE SEQUENCE [LARGE SCALE MRNA] (ISOFORM 3)</scope>
    <scope>NUCLEOTIDE SEQUENCE [LARGE SCALE MRNA] OF 351-697</scope>
    <source>
        <tissue>Small intestine</tissue>
    </source>
</reference>
<reference key="4">
    <citation type="submission" date="2005-07" db="EMBL/GenBank/DDBJ databases">
        <authorList>
            <person name="Mural R.J."/>
            <person name="Istrail S."/>
            <person name="Sutton G.G."/>
            <person name="Florea L."/>
            <person name="Halpern A.L."/>
            <person name="Mobarry C.M."/>
            <person name="Lippert R."/>
            <person name="Walenz B."/>
            <person name="Shatkay H."/>
            <person name="Dew I."/>
            <person name="Miller J.R."/>
            <person name="Flanigan M.J."/>
            <person name="Edwards N.J."/>
            <person name="Bolanos R."/>
            <person name="Fasulo D."/>
            <person name="Halldorsson B.V."/>
            <person name="Hannenhalli S."/>
            <person name="Turner R."/>
            <person name="Yooseph S."/>
            <person name="Lu F."/>
            <person name="Nusskern D.R."/>
            <person name="Shue B.C."/>
            <person name="Zheng X.H."/>
            <person name="Zhong F."/>
            <person name="Delcher A.L."/>
            <person name="Huson D.H."/>
            <person name="Kravitz S.A."/>
            <person name="Mouchard L."/>
            <person name="Reinert K."/>
            <person name="Remington K.A."/>
            <person name="Clark A.G."/>
            <person name="Waterman M.S."/>
            <person name="Eichler E.E."/>
            <person name="Adams M.D."/>
            <person name="Hunkapiller M.W."/>
            <person name="Myers E.W."/>
            <person name="Venter J.C."/>
        </authorList>
    </citation>
    <scope>NUCLEOTIDE SEQUENCE [LARGE SCALE GENOMIC DNA]</scope>
</reference>
<reference key="5">
    <citation type="journal article" date="2004" name="Genome Res.">
        <title>The status, quality, and expansion of the NIH full-length cDNA project: the Mammalian Gene Collection (MGC).</title>
        <authorList>
            <consortium name="The MGC Project Team"/>
        </authorList>
    </citation>
    <scope>NUCLEOTIDE SEQUENCE [LARGE SCALE MRNA] (ISOFORM 1)</scope>
</reference>
<reference key="6">
    <citation type="submission" date="2000-12" db="EMBL/GenBank/DDBJ databases">
        <title>Differential gene expression in HTLV-1-infected adult T cell leukemia cell line.</title>
        <authorList>
            <person name="Ruckes T.M."/>
            <person name="Saul D."/>
            <person name="Romaker D."/>
            <person name="Grassmann R."/>
        </authorList>
    </citation>
    <scope>NUCLEOTIDE SEQUENCE [MRNA] OF 377-697</scope>
</reference>
<reference key="7">
    <citation type="journal article" date="2008" name="Proc. Natl. Acad. Sci. U.S.A.">
        <title>A quantitative atlas of mitotic phosphorylation.</title>
        <authorList>
            <person name="Dephoure N."/>
            <person name="Zhou C."/>
            <person name="Villen J."/>
            <person name="Beausoleil S.A."/>
            <person name="Bakalarski C.E."/>
            <person name="Elledge S.J."/>
            <person name="Gygi S.P."/>
        </authorList>
    </citation>
    <scope>IDENTIFICATION BY MASS SPECTROMETRY [LARGE SCALE ANALYSIS]</scope>
    <source>
        <tissue>Cervix carcinoma</tissue>
    </source>
</reference>
<reference key="8">
    <citation type="journal article" date="2013" name="J. Proteome Res.">
        <title>Toward a comprehensive characterization of a human cancer cell phosphoproteome.</title>
        <authorList>
            <person name="Zhou H."/>
            <person name="Di Palma S."/>
            <person name="Preisinger C."/>
            <person name="Peng M."/>
            <person name="Polat A.N."/>
            <person name="Heck A.J."/>
            <person name="Mohammed S."/>
        </authorList>
    </citation>
    <scope>PHOSPHORYLATION [LARGE SCALE ANALYSIS] AT SER-360</scope>
    <scope>IDENTIFICATION BY MASS SPECTROMETRY [LARGE SCALE ANALYSIS]</scope>
    <source>
        <tissue>Erythroleukemia</tissue>
    </source>
</reference>
<keyword id="KW-0002">3D-structure</keyword>
<keyword id="KW-0025">Alternative splicing</keyword>
<keyword id="KW-0968">Cytoplasmic vesicle</keyword>
<keyword id="KW-0217">Developmental protein</keyword>
<keyword id="KW-0221">Differentiation</keyword>
<keyword id="KW-0597">Phosphoprotein</keyword>
<keyword id="KW-1267">Proteomics identification</keyword>
<keyword id="KW-1185">Reference proteome</keyword>
<keyword id="KW-0744">Spermatogenesis</keyword>
<sequence>MARLVAVCRDGEEEFPFERRQIPLYIDDTLTMVMEFPDNVLNLDGHQNNGAQLKQFIQRHGMLKQQDLSIAMVVTSREVLSALSQLVPCVGCRRSVERLFSQLVESGNPALEPLTVGPKGVLSVTRSCMTDAKKLYTLFYVHGSKLNDMIDAIPKSKKNKRCQLHSLDTHKPKPLGGCWMDVWELMSQECRDEVVLIDSSCLLETLETYLRKHRFCTDCKNKVLRAYNILIGELDCSKEKGYCAALYEGLRCCPHERHIHVCCETDFIAHLLGRAEPEFAGGRRERHAKTIDIAQEEVLTCLGIHLYERLHRIWQKLRAEEQTWQMLFYLGVDALRKSFEMTVEKVQGISRLEQLCEEFSEEERVRELKQEKKRQKRKNRRKNKCVCDIPTPLQTADEKEVSQEKETDFIENSSCKACGSTEDGNTCVEVIVTNENTSCTCPSSGNLLGSPKIKKGLSPHCNGSDCGYSSSMEGSETGSREGSDVACTEGICNHDEHGDDSCVHHCEDKEDDGDSCVECWANSEENDTKGKNKKKKKKSKILKCDEHIQKLGSCITDPGNRETSGNTMHTVFHRDKTKDTHPESCCSSEKGGQPLPWFEHRKNVPQFAEPTETLFGPDSGKGAKSLVELLDESECTSDEEIFISQDEIQSFMANNQSFYSNREQYRQHLKEKFNKYCRLNDHKRPICSGWLTTAGAN</sequence>